<proteinExistence type="inferred from homology"/>
<feature type="chain" id="PRO_0000333266" description="24 kDa Ras-like protein">
    <location>
        <begin position="1"/>
        <end position="212"/>
    </location>
</feature>
<feature type="propeptide" id="PRO_0000343565" description="Removed in mature form" evidence="1">
    <location>
        <begin position="213"/>
        <end position="215"/>
    </location>
</feature>
<feature type="region of interest" description="Disordered" evidence="3">
    <location>
        <begin position="179"/>
        <end position="199"/>
    </location>
</feature>
<feature type="short sequence motif" description="Effector region" evidence="4">
    <location>
        <begin position="39"/>
        <end position="47"/>
    </location>
</feature>
<feature type="binding site" evidence="1">
    <location>
        <begin position="17"/>
        <end position="24"/>
    </location>
    <ligand>
        <name>GTP</name>
        <dbReference type="ChEBI" id="CHEBI:37565"/>
    </ligand>
</feature>
<feature type="binding site" evidence="1">
    <location>
        <begin position="64"/>
        <end position="68"/>
    </location>
    <ligand>
        <name>GTP</name>
        <dbReference type="ChEBI" id="CHEBI:37565"/>
    </ligand>
</feature>
<feature type="binding site" evidence="1">
    <location>
        <begin position="123"/>
        <end position="126"/>
    </location>
    <ligand>
        <name>GTP</name>
        <dbReference type="ChEBI" id="CHEBI:37565"/>
    </ligand>
</feature>
<feature type="modified residue" description="Cysteine methyl ester" evidence="1">
    <location>
        <position position="212"/>
    </location>
</feature>
<feature type="lipid moiety-binding region" description="S-farnesyl cysteine" evidence="1">
    <location>
        <position position="212"/>
    </location>
</feature>
<keyword id="KW-1003">Cell membrane</keyword>
<keyword id="KW-0342">GTP-binding</keyword>
<keyword id="KW-0378">Hydrolase</keyword>
<keyword id="KW-0449">Lipoprotein</keyword>
<keyword id="KW-0472">Membrane</keyword>
<keyword id="KW-0488">Methylation</keyword>
<keyword id="KW-0547">Nucleotide-binding</keyword>
<keyword id="KW-0636">Prenylation</keyword>
<keyword id="KW-1185">Reference proteome</keyword>
<evidence type="ECO:0000250" key="1"/>
<evidence type="ECO:0000250" key="2">
    <source>
        <dbReference type="UniProtKB" id="P01116"/>
    </source>
</evidence>
<evidence type="ECO:0000256" key="3">
    <source>
        <dbReference type="SAM" id="MobiDB-lite"/>
    </source>
</evidence>
<evidence type="ECO:0000305" key="4"/>
<organism>
    <name type="scientific">Coprinopsis cinerea (strain Okayama-7 / 130 / ATCC MYA-4618 / FGSC 9003)</name>
    <name type="common">Inky cap fungus</name>
    <name type="synonym">Hormographiella aspergillata</name>
    <dbReference type="NCBI Taxonomy" id="240176"/>
    <lineage>
        <taxon>Eukaryota</taxon>
        <taxon>Fungi</taxon>
        <taxon>Dikarya</taxon>
        <taxon>Basidiomycota</taxon>
        <taxon>Agaricomycotina</taxon>
        <taxon>Agaricomycetes</taxon>
        <taxon>Agaricomycetidae</taxon>
        <taxon>Agaricales</taxon>
        <taxon>Agaricineae</taxon>
        <taxon>Psathyrellaceae</taxon>
        <taxon>Coprinopsis</taxon>
    </lineage>
</organism>
<dbReference type="EC" id="3.6.5.2" evidence="2"/>
<dbReference type="EMBL" id="AACS02000004">
    <property type="protein sequence ID" value="EAU85544.2"/>
    <property type="status" value="ALT_FRAME"/>
    <property type="molecule type" value="Genomic_DNA"/>
</dbReference>
<dbReference type="RefSeq" id="XP_001836360.2">
    <property type="nucleotide sequence ID" value="XM_001836308.2"/>
</dbReference>
<dbReference type="SMR" id="A8NU18"/>
<dbReference type="FunCoup" id="A8NU18">
    <property type="interactions" value="236"/>
</dbReference>
<dbReference type="STRING" id="240176.A8NU18"/>
<dbReference type="GeneID" id="6012903"/>
<dbReference type="KEGG" id="cci:CC1G_06445"/>
<dbReference type="eggNOG" id="KOG0395">
    <property type="taxonomic scope" value="Eukaryota"/>
</dbReference>
<dbReference type="HOGENOM" id="CLU_1045908_0_0_1"/>
<dbReference type="InParanoid" id="A8NU18"/>
<dbReference type="OrthoDB" id="5976022at2759"/>
<dbReference type="Proteomes" id="UP000001861">
    <property type="component" value="Unassembled WGS sequence"/>
</dbReference>
<dbReference type="GO" id="GO:0005886">
    <property type="term" value="C:plasma membrane"/>
    <property type="evidence" value="ECO:0007669"/>
    <property type="project" value="UniProtKB-SubCell"/>
</dbReference>
<dbReference type="GO" id="GO:0003925">
    <property type="term" value="F:G protein activity"/>
    <property type="evidence" value="ECO:0007669"/>
    <property type="project" value="UniProtKB-EC"/>
</dbReference>
<dbReference type="GO" id="GO:0005525">
    <property type="term" value="F:GTP binding"/>
    <property type="evidence" value="ECO:0007669"/>
    <property type="project" value="UniProtKB-KW"/>
</dbReference>
<dbReference type="GO" id="GO:0007165">
    <property type="term" value="P:signal transduction"/>
    <property type="evidence" value="ECO:0007669"/>
    <property type="project" value="InterPro"/>
</dbReference>
<dbReference type="CDD" id="cd04138">
    <property type="entry name" value="H_N_K_Ras_like"/>
    <property type="match status" value="1"/>
</dbReference>
<dbReference type="FunFam" id="3.40.50.300:FF:000080">
    <property type="entry name" value="Ras-like GTPase Ras1"/>
    <property type="match status" value="1"/>
</dbReference>
<dbReference type="Gene3D" id="3.40.50.300">
    <property type="entry name" value="P-loop containing nucleotide triphosphate hydrolases"/>
    <property type="match status" value="1"/>
</dbReference>
<dbReference type="InterPro" id="IPR027417">
    <property type="entry name" value="P-loop_NTPase"/>
</dbReference>
<dbReference type="InterPro" id="IPR005225">
    <property type="entry name" value="Small_GTP-bd"/>
</dbReference>
<dbReference type="InterPro" id="IPR001806">
    <property type="entry name" value="Small_GTPase"/>
</dbReference>
<dbReference type="InterPro" id="IPR020849">
    <property type="entry name" value="Small_GTPase_Ras-type"/>
</dbReference>
<dbReference type="NCBIfam" id="TIGR00231">
    <property type="entry name" value="small_GTP"/>
    <property type="match status" value="1"/>
</dbReference>
<dbReference type="PANTHER" id="PTHR24070">
    <property type="entry name" value="RAS, DI-RAS, AND RHEB FAMILY MEMBERS OF SMALL GTPASE SUPERFAMILY"/>
    <property type="match status" value="1"/>
</dbReference>
<dbReference type="Pfam" id="PF00071">
    <property type="entry name" value="Ras"/>
    <property type="match status" value="1"/>
</dbReference>
<dbReference type="PRINTS" id="PR00449">
    <property type="entry name" value="RASTRNSFRMNG"/>
</dbReference>
<dbReference type="SMART" id="SM00175">
    <property type="entry name" value="RAB"/>
    <property type="match status" value="1"/>
</dbReference>
<dbReference type="SMART" id="SM00176">
    <property type="entry name" value="RAN"/>
    <property type="match status" value="1"/>
</dbReference>
<dbReference type="SMART" id="SM00173">
    <property type="entry name" value="RAS"/>
    <property type="match status" value="1"/>
</dbReference>
<dbReference type="SMART" id="SM00174">
    <property type="entry name" value="RHO"/>
    <property type="match status" value="1"/>
</dbReference>
<dbReference type="SUPFAM" id="SSF52540">
    <property type="entry name" value="P-loop containing nucleoside triphosphate hydrolases"/>
    <property type="match status" value="1"/>
</dbReference>
<dbReference type="PROSITE" id="PS51421">
    <property type="entry name" value="RAS"/>
    <property type="match status" value="1"/>
</dbReference>
<protein>
    <recommendedName>
        <fullName>24 kDa Ras-like protein</fullName>
        <ecNumber evidence="2">3.6.5.2</ecNumber>
    </recommendedName>
</protein>
<comment type="function">
    <text>Ras proteins bind GDP/GTP and possess intrinsic GTPase activity.</text>
</comment>
<comment type="catalytic activity">
    <reaction evidence="2">
        <text>GTP + H2O = GDP + phosphate + H(+)</text>
        <dbReference type="Rhea" id="RHEA:19669"/>
        <dbReference type="ChEBI" id="CHEBI:15377"/>
        <dbReference type="ChEBI" id="CHEBI:15378"/>
        <dbReference type="ChEBI" id="CHEBI:37565"/>
        <dbReference type="ChEBI" id="CHEBI:43474"/>
        <dbReference type="ChEBI" id="CHEBI:58189"/>
        <dbReference type="EC" id="3.6.5.2"/>
    </reaction>
</comment>
<comment type="subcellular location">
    <subcellularLocation>
        <location evidence="4">Cell membrane</location>
        <topology evidence="4">Lipid-anchor</topology>
        <orientation evidence="4">Cytoplasmic side</orientation>
    </subcellularLocation>
</comment>
<comment type="similarity">
    <text evidence="4">Belongs to the small GTPase superfamily. Ras family.</text>
</comment>
<comment type="sequence caution" evidence="4">
    <conflict type="frameshift">
        <sequence resource="EMBL-CDS" id="EAU85544"/>
    </conflict>
</comment>
<sequence length="215" mass="24012">MAARAQFLREYKLVVVGGGGVGKSALTIQFIQSHFVDEYDPTIEDSYRKQCIIDDEVALLDVLDTAGQEEYGAMREQYMRTGEGFLLVYSITSRNSFEEISIFHQQILRVKDQDSFPVIVVANKCDLEYERQVGMNEGRDLAKHFGCKFIETSAKQRINVDEAFSNLVREIRKYNREQQTGRPAIAAGGGGPAGSYTQDRHHDEAPGCCAGCVIA</sequence>
<reference key="1">
    <citation type="journal article" date="2010" name="Proc. Natl. Acad. Sci. U.S.A.">
        <title>Insights into evolution of multicellular fungi from the assembled chromosomes of the mushroom Coprinopsis cinerea (Coprinus cinereus).</title>
        <authorList>
            <person name="Stajich J.E."/>
            <person name="Wilke S.K."/>
            <person name="Ahren D."/>
            <person name="Au C.H."/>
            <person name="Birren B.W."/>
            <person name="Borodovsky M."/>
            <person name="Burns C."/>
            <person name="Canbaeck B."/>
            <person name="Casselton L.A."/>
            <person name="Cheng C.K."/>
            <person name="Deng J."/>
            <person name="Dietrich F.S."/>
            <person name="Fargo D.C."/>
            <person name="Farman M.L."/>
            <person name="Gathman A.C."/>
            <person name="Goldberg J."/>
            <person name="Guigo R."/>
            <person name="Hoegger P.J."/>
            <person name="Hooker J.B."/>
            <person name="Huggins A."/>
            <person name="James T.Y."/>
            <person name="Kamada T."/>
            <person name="Kilaru S."/>
            <person name="Kodira C."/>
            <person name="Kuees U."/>
            <person name="Kupfer D."/>
            <person name="Kwan H.S."/>
            <person name="Lomsadze A."/>
            <person name="Li W."/>
            <person name="Lilly W.W."/>
            <person name="Ma L.-J."/>
            <person name="Mackey A.J."/>
            <person name="Manning G."/>
            <person name="Martin F."/>
            <person name="Muraguchi H."/>
            <person name="Natvig D.O."/>
            <person name="Palmerini H."/>
            <person name="Ramesh M.A."/>
            <person name="Rehmeyer C.J."/>
            <person name="Roe B.A."/>
            <person name="Shenoy N."/>
            <person name="Stanke M."/>
            <person name="Ter-Hovhannisyan V."/>
            <person name="Tunlid A."/>
            <person name="Velagapudi R."/>
            <person name="Vision T.J."/>
            <person name="Zeng Q."/>
            <person name="Zolan M.E."/>
            <person name="Pukkila P.J."/>
        </authorList>
    </citation>
    <scope>NUCLEOTIDE SEQUENCE [LARGE SCALE GENOMIC DNA]</scope>
    <source>
        <strain>Okayama-7 / 130 / ATCC MYA-4618 / FGSC 9003</strain>
    </source>
</reference>
<accession>A8NU18</accession>
<gene>
    <name type="primary">CC-RAS</name>
    <name type="ORF">CC1G_06445</name>
</gene>
<name>RASL_COPC7</name>